<evidence type="ECO:0000255" key="1"/>
<evidence type="ECO:0000255" key="2">
    <source>
        <dbReference type="PROSITE-ProRule" id="PRU00498"/>
    </source>
</evidence>
<evidence type="ECO:0000256" key="3">
    <source>
        <dbReference type="SAM" id="MobiDB-lite"/>
    </source>
</evidence>
<evidence type="ECO:0000269" key="4">
    <source>
    </source>
</evidence>
<evidence type="ECO:0000269" key="5">
    <source>
    </source>
</evidence>
<evidence type="ECO:0000269" key="6">
    <source>
    </source>
</evidence>
<evidence type="ECO:0000303" key="7">
    <source>
    </source>
</evidence>
<evidence type="ECO:0000305" key="8"/>
<feature type="chain" id="PRO_0000458953" description="MFS-type transporter tstD">
    <location>
        <begin position="1"/>
        <end position="554"/>
    </location>
</feature>
<feature type="transmembrane region" description="Helical" evidence="1">
    <location>
        <begin position="76"/>
        <end position="96"/>
    </location>
</feature>
<feature type="transmembrane region" description="Helical" evidence="1">
    <location>
        <begin position="115"/>
        <end position="135"/>
    </location>
</feature>
<feature type="transmembrane region" description="Helical" evidence="1">
    <location>
        <begin position="142"/>
        <end position="162"/>
    </location>
</feature>
<feature type="transmembrane region" description="Helical" evidence="1">
    <location>
        <begin position="173"/>
        <end position="193"/>
    </location>
</feature>
<feature type="transmembrane region" description="Helical" evidence="1">
    <location>
        <begin position="202"/>
        <end position="222"/>
    </location>
</feature>
<feature type="transmembrane region" description="Helical" evidence="1">
    <location>
        <begin position="231"/>
        <end position="251"/>
    </location>
</feature>
<feature type="transmembrane region" description="Helical" evidence="1">
    <location>
        <begin position="311"/>
        <end position="331"/>
    </location>
</feature>
<feature type="transmembrane region" description="Helical" evidence="1">
    <location>
        <begin position="354"/>
        <end position="374"/>
    </location>
</feature>
<feature type="transmembrane region" description="Helical" evidence="1">
    <location>
        <begin position="413"/>
        <end position="433"/>
    </location>
</feature>
<feature type="transmembrane region" description="Helical" evidence="1">
    <location>
        <begin position="442"/>
        <end position="462"/>
    </location>
</feature>
<feature type="transmembrane region" description="Helical" evidence="1">
    <location>
        <begin position="473"/>
        <end position="493"/>
    </location>
</feature>
<feature type="transmembrane region" description="Helical" evidence="1">
    <location>
        <begin position="504"/>
        <end position="524"/>
    </location>
</feature>
<feature type="region of interest" description="Disordered" evidence="3">
    <location>
        <begin position="1"/>
        <end position="68"/>
    </location>
</feature>
<feature type="region of interest" description="Disordered" evidence="3">
    <location>
        <begin position="281"/>
        <end position="300"/>
    </location>
</feature>
<feature type="compositionally biased region" description="Polar residues" evidence="3">
    <location>
        <begin position="1"/>
        <end position="10"/>
    </location>
</feature>
<feature type="compositionally biased region" description="Polar residues" evidence="3">
    <location>
        <begin position="27"/>
        <end position="38"/>
    </location>
</feature>
<feature type="compositionally biased region" description="Basic and acidic residues" evidence="3">
    <location>
        <begin position="39"/>
        <end position="48"/>
    </location>
</feature>
<feature type="glycosylation site" description="N-linked (GlcNAc...) asparagine" evidence="2">
    <location>
        <position position="6"/>
    </location>
</feature>
<feature type="glycosylation site" description="N-linked (GlcNAc...) asparagine" evidence="2">
    <location>
        <position position="107"/>
    </location>
</feature>
<feature type="glycosylation site" description="N-linked (GlcNAc...) asparagine" evidence="2">
    <location>
        <position position="114"/>
    </location>
</feature>
<feature type="glycosylation site" description="N-linked (GlcNAc...) asparagine" evidence="2">
    <location>
        <position position="437"/>
    </location>
</feature>
<gene>
    <name evidence="7" type="primary">tstD</name>
    <name type="ORF">TSTA_048470</name>
</gene>
<reference key="1">
    <citation type="journal article" date="2015" name="Genome Announc.">
        <title>Genome sequence of the AIDS-associated pathogen Penicillium marneffei (ATCC18224) and its near taxonomic relative Talaromyces stipitatus (ATCC10500).</title>
        <authorList>
            <person name="Nierman W.C."/>
            <person name="Fedorova-Abrams N.D."/>
            <person name="Andrianopoulos A."/>
        </authorList>
    </citation>
    <scope>NUCLEOTIDE SEQUENCE [LARGE SCALE GENOMIC DNA]</scope>
    <source>
        <strain>ATCC 10500 / CBS 375.48 / QM 6759 / NRRL 1006</strain>
    </source>
</reference>
<reference key="2">
    <citation type="journal article" date="1997" name="J. Antibiot.">
        <title>CP-225,917 and CP-263,114, novel Ras farnesylation inhibitors from an unidentified fungus. I. Taxonomy, fermentation, isolation, and biochemical properties.</title>
        <authorList>
            <person name="Dabrah T.T."/>
            <person name="Harwood H.J. Jr."/>
            <person name="Huang L.H."/>
            <person name="Jankovich N.D."/>
            <person name="Kaneko T."/>
            <person name="Li J.C."/>
            <person name="Lindsey S."/>
            <person name="Moshier P.M."/>
            <person name="Subashi T.A."/>
            <person name="Therrien M."/>
            <person name="Watts P.C."/>
        </authorList>
    </citation>
    <scope>BIOTECHNOLOGY</scope>
</reference>
<reference key="3">
    <citation type="journal article" date="2015" name="Org. Lett.">
        <title>Biosynthetic study on antihypercholesterolemic agent phomoidride: general biogenesis of fungal dimeric anhydrides.</title>
        <authorList>
            <person name="Fujii R."/>
            <person name="Matsu Y."/>
            <person name="Minami A."/>
            <person name="Nagamine S."/>
            <person name="Takeuchi I."/>
            <person name="Gomi K."/>
            <person name="Oikawa H."/>
        </authorList>
    </citation>
    <scope>IDENTIFICATION</scope>
    <scope>FUNCTION</scope>
</reference>
<reference key="4">
    <citation type="journal article" date="2022" name="J. Am. Chem. Soc.">
        <title>Elucidation of late-stage biosynthesis of phomoidride: proposal of cyclization mechanism affording characteristic nine-membered ring of fungal dimeric anhydride.</title>
        <authorList>
            <person name="Yamamoto S."/>
            <person name="Matsuyama T."/>
            <person name="Ozaki T."/>
            <person name="Takino J."/>
            <person name="Sato H."/>
            <person name="Uchiyama M."/>
            <person name="Minami A."/>
            <person name="Oikawa H."/>
        </authorList>
    </citation>
    <scope>FUNCTION</scope>
</reference>
<protein>
    <recommendedName>
        <fullName evidence="7">MFS-type transporter tstD</fullName>
    </recommendedName>
    <alternativeName>
        <fullName evidence="7">Phomoidride biosynthesis cluster protein D</fullName>
    </alternativeName>
</protein>
<keyword id="KW-0325">Glycoprotein</keyword>
<keyword id="KW-0472">Membrane</keyword>
<keyword id="KW-1185">Reference proteome</keyword>
<keyword id="KW-0812">Transmembrane</keyword>
<keyword id="KW-1133">Transmembrane helix</keyword>
<keyword id="KW-0813">Transport</keyword>
<accession>B8MKZ1</accession>
<sequence length="554" mass="60760">MPEPFNSTMPLPSPPNAQPKDEKVGLQDSNQPPEMSASSEKKHPENENRQSQQNLRPTESENNEPYSVHSSSAKKLMVLAASLAGFFSPLSASIYYPALPAIEKALNVSSTQVNLTVTTYLILQGLAPMVTASFSDSAGRRPGYAICFIVYLAANLGLALQNSYAALMVLRALQSAGSSGAIAIANGVVSDIITPQERGSYIAFASVGSILGPSLSPIIGGLFAEYTDWHWIFWFLLIFSGAFCVPFFLFFPETCRKIVGNGKGVPPFWNRNLPDILRARKEKQRQQRAENEEENANRQRSRLSIPNPLKVFVVFTNLQTVMTLCPAGVAFGSYYAVLTGASGEFTRVYHFSEIKVALIFLPMGVGGLISALSTGKLVNWNFHRHARKRGIMVARNRRQELLNFPIERARLEIALPVFCLGCVCTVLYGWLMTQDVNVSGPIILLFVMSWSFAAFYQVLNVLLVDTYPGRGAMVTAVVNLLRCEIGAGMAAMISPLTSATGSGWSYTIIALIGVAATSPLLLTMKYGMKWRQESAAKAEEKKSRMQEAQQRQEV</sequence>
<name>TSTD_TALSN</name>
<dbReference type="EMBL" id="EQ962657">
    <property type="protein sequence ID" value="EED15407.1"/>
    <property type="molecule type" value="Genomic_DNA"/>
</dbReference>
<dbReference type="RefSeq" id="XP_002485360.1">
    <property type="nucleotide sequence ID" value="XM_002485315.1"/>
</dbReference>
<dbReference type="SMR" id="B8MKZ1"/>
<dbReference type="FunCoup" id="B8MKZ1">
    <property type="interactions" value="87"/>
</dbReference>
<dbReference type="STRING" id="441959.B8MKZ1"/>
<dbReference type="GeneID" id="8107029"/>
<dbReference type="VEuPathDB" id="FungiDB:TSTA_048470"/>
<dbReference type="eggNOG" id="KOG0255">
    <property type="taxonomic scope" value="Eukaryota"/>
</dbReference>
<dbReference type="HOGENOM" id="CLU_008455_8_4_1"/>
<dbReference type="InParanoid" id="B8MKZ1"/>
<dbReference type="OMA" id="GWVLGHK"/>
<dbReference type="OrthoDB" id="440553at2759"/>
<dbReference type="PhylomeDB" id="B8MKZ1"/>
<dbReference type="Proteomes" id="UP000001745">
    <property type="component" value="Unassembled WGS sequence"/>
</dbReference>
<dbReference type="GO" id="GO:0005886">
    <property type="term" value="C:plasma membrane"/>
    <property type="evidence" value="ECO:0007669"/>
    <property type="project" value="TreeGrafter"/>
</dbReference>
<dbReference type="GO" id="GO:0022857">
    <property type="term" value="F:transmembrane transporter activity"/>
    <property type="evidence" value="ECO:0007669"/>
    <property type="project" value="InterPro"/>
</dbReference>
<dbReference type="CDD" id="cd17323">
    <property type="entry name" value="MFS_Tpo1_MDR_like"/>
    <property type="match status" value="1"/>
</dbReference>
<dbReference type="FunFam" id="1.20.1720.10:FF:000009">
    <property type="entry name" value="MFS multidrug transporter"/>
    <property type="match status" value="1"/>
</dbReference>
<dbReference type="Gene3D" id="1.20.1250.20">
    <property type="entry name" value="MFS general substrate transporter like domains"/>
    <property type="match status" value="1"/>
</dbReference>
<dbReference type="Gene3D" id="1.20.1720.10">
    <property type="entry name" value="Multidrug resistance protein D"/>
    <property type="match status" value="1"/>
</dbReference>
<dbReference type="InterPro" id="IPR011701">
    <property type="entry name" value="MFS"/>
</dbReference>
<dbReference type="InterPro" id="IPR020846">
    <property type="entry name" value="MFS_dom"/>
</dbReference>
<dbReference type="InterPro" id="IPR036259">
    <property type="entry name" value="MFS_trans_sf"/>
</dbReference>
<dbReference type="PANTHER" id="PTHR23502">
    <property type="entry name" value="MAJOR FACILITATOR SUPERFAMILY"/>
    <property type="match status" value="1"/>
</dbReference>
<dbReference type="PANTHER" id="PTHR23502:SF51">
    <property type="entry name" value="QUINIDINE RESISTANCE PROTEIN 1-RELATED"/>
    <property type="match status" value="1"/>
</dbReference>
<dbReference type="Pfam" id="PF07690">
    <property type="entry name" value="MFS_1"/>
    <property type="match status" value="1"/>
</dbReference>
<dbReference type="SUPFAM" id="SSF103473">
    <property type="entry name" value="MFS general substrate transporter"/>
    <property type="match status" value="1"/>
</dbReference>
<dbReference type="PROSITE" id="PS50850">
    <property type="entry name" value="MFS"/>
    <property type="match status" value="1"/>
</dbReference>
<organism>
    <name type="scientific">Talaromyces stipitatus (strain ATCC 10500 / CBS 375.48 / QM 6759 / NRRL 1006)</name>
    <name type="common">Penicillium stipitatum</name>
    <dbReference type="NCBI Taxonomy" id="441959"/>
    <lineage>
        <taxon>Eukaryota</taxon>
        <taxon>Fungi</taxon>
        <taxon>Dikarya</taxon>
        <taxon>Ascomycota</taxon>
        <taxon>Pezizomycotina</taxon>
        <taxon>Eurotiomycetes</taxon>
        <taxon>Eurotiomycetidae</taxon>
        <taxon>Eurotiales</taxon>
        <taxon>Trichocomaceae</taxon>
        <taxon>Talaromyces</taxon>
        <taxon>Talaromyces sect. Talaromyces</taxon>
    </lineage>
</organism>
<proteinExistence type="evidence at protein level"/>
<comment type="function">
    <text evidence="4 5">MFS-type transporter; part of the gene cluster that mediates the biosynthesis of the antihypercholesterolemic agents phomoidrides which are dimeric anhydrides.</text>
</comment>
<comment type="subcellular location">
    <subcellularLocation>
        <location evidence="1">Membrane</location>
        <topology evidence="1">Multi-pass membrane protein</topology>
    </subcellularLocation>
</comment>
<comment type="biotechnology">
    <text evidence="6">Phomoidrides A and B (also known as CP-225,917 and CP-263,114) are potent inhibitors of Ras farnesyltransferase and squalene synthase (PubMed:9066758). CP-225,917 and CP-263,114 inhibit Ras farnesyl transferase from rat brain with IC(50) values of 6 uM and 20 uoM, respectively (PubMed:9066758). CP-225,917 inhibits squalene synthase with an IC(50) value of 43 uM and CP-263,114 with an IC(50) of 160 uM (PubMed:9066758).</text>
</comment>
<comment type="similarity">
    <text evidence="8">Belongs to the major facilitator superfamily.</text>
</comment>